<geneLocation type="chloroplast"/>
<feature type="chain" id="PRO_0000251691" description="Large ribosomal subunit protein uL16c">
    <location>
        <begin position="1"/>
        <end position="135"/>
    </location>
</feature>
<reference key="1">
    <citation type="journal article" date="2006" name="BMC Genomics">
        <title>The complete chloroplast genome sequence of Gossypium hirsutum: organization and phylogenetic relationships to other angiosperms.</title>
        <authorList>
            <person name="Lee S.-B."/>
            <person name="Kaittanis C."/>
            <person name="Jansen R.K."/>
            <person name="Hostetler J.B."/>
            <person name="Tallon L.J."/>
            <person name="Town C.D."/>
            <person name="Daniell H."/>
        </authorList>
    </citation>
    <scope>NUCLEOTIDE SEQUENCE [LARGE SCALE GENOMIC DNA]</scope>
    <source>
        <strain>cv. Coker 310FR</strain>
    </source>
</reference>
<protein>
    <recommendedName>
        <fullName evidence="1">Large ribosomal subunit protein uL16c</fullName>
    </recommendedName>
    <alternativeName>
        <fullName evidence="2">50S ribosomal protein L16, chloroplastic</fullName>
    </alternativeName>
</protein>
<keyword id="KW-0150">Chloroplast</keyword>
<keyword id="KW-0934">Plastid</keyword>
<keyword id="KW-1185">Reference proteome</keyword>
<keyword id="KW-0687">Ribonucleoprotein</keyword>
<keyword id="KW-0689">Ribosomal protein</keyword>
<evidence type="ECO:0000255" key="1">
    <source>
        <dbReference type="HAMAP-Rule" id="MF_01342"/>
    </source>
</evidence>
<evidence type="ECO:0000305" key="2"/>
<name>RK16_GOSHI</name>
<dbReference type="EMBL" id="DQ345959">
    <property type="protein sequence ID" value="ABC73664.1"/>
    <property type="molecule type" value="Genomic_DNA"/>
</dbReference>
<dbReference type="RefSeq" id="YP_538973.1">
    <property type="nucleotide sequence ID" value="NC_007944.1"/>
</dbReference>
<dbReference type="SMR" id="Q2L940"/>
<dbReference type="GeneID" id="3989141"/>
<dbReference type="KEGG" id="ghi:3989141"/>
<dbReference type="OrthoDB" id="64104at41938"/>
<dbReference type="Proteomes" id="UP000189702">
    <property type="component" value="Chloroplast Pltd"/>
</dbReference>
<dbReference type="GO" id="GO:0009507">
    <property type="term" value="C:chloroplast"/>
    <property type="evidence" value="ECO:0007669"/>
    <property type="project" value="UniProtKB-SubCell"/>
</dbReference>
<dbReference type="GO" id="GO:0005762">
    <property type="term" value="C:mitochondrial large ribosomal subunit"/>
    <property type="evidence" value="ECO:0000318"/>
    <property type="project" value="GO_Central"/>
</dbReference>
<dbReference type="GO" id="GO:0019843">
    <property type="term" value="F:rRNA binding"/>
    <property type="evidence" value="ECO:0000318"/>
    <property type="project" value="GO_Central"/>
</dbReference>
<dbReference type="GO" id="GO:0003735">
    <property type="term" value="F:structural constituent of ribosome"/>
    <property type="evidence" value="ECO:0000318"/>
    <property type="project" value="GO_Central"/>
</dbReference>
<dbReference type="GO" id="GO:0032543">
    <property type="term" value="P:mitochondrial translation"/>
    <property type="evidence" value="ECO:0000318"/>
    <property type="project" value="GO_Central"/>
</dbReference>
<dbReference type="CDD" id="cd01433">
    <property type="entry name" value="Ribosomal_L16_L10e"/>
    <property type="match status" value="1"/>
</dbReference>
<dbReference type="FunFam" id="3.90.1170.10:FF:000001">
    <property type="entry name" value="50S ribosomal protein L16"/>
    <property type="match status" value="1"/>
</dbReference>
<dbReference type="Gene3D" id="3.90.1170.10">
    <property type="entry name" value="Ribosomal protein L10e/L16"/>
    <property type="match status" value="1"/>
</dbReference>
<dbReference type="HAMAP" id="MF_01342">
    <property type="entry name" value="Ribosomal_uL16"/>
    <property type="match status" value="1"/>
</dbReference>
<dbReference type="InterPro" id="IPR047873">
    <property type="entry name" value="Ribosomal_uL16"/>
</dbReference>
<dbReference type="InterPro" id="IPR000114">
    <property type="entry name" value="Ribosomal_uL16_bact-type"/>
</dbReference>
<dbReference type="InterPro" id="IPR020798">
    <property type="entry name" value="Ribosomal_uL16_CS"/>
</dbReference>
<dbReference type="InterPro" id="IPR016180">
    <property type="entry name" value="Ribosomal_uL16_dom"/>
</dbReference>
<dbReference type="InterPro" id="IPR036920">
    <property type="entry name" value="Ribosomal_uL16_sf"/>
</dbReference>
<dbReference type="NCBIfam" id="TIGR01164">
    <property type="entry name" value="rplP_bact"/>
    <property type="match status" value="1"/>
</dbReference>
<dbReference type="PANTHER" id="PTHR12220">
    <property type="entry name" value="50S/60S RIBOSOMAL PROTEIN L16"/>
    <property type="match status" value="1"/>
</dbReference>
<dbReference type="PANTHER" id="PTHR12220:SF13">
    <property type="entry name" value="LARGE RIBOSOMAL SUBUNIT PROTEIN UL16M"/>
    <property type="match status" value="1"/>
</dbReference>
<dbReference type="Pfam" id="PF00252">
    <property type="entry name" value="Ribosomal_L16"/>
    <property type="match status" value="1"/>
</dbReference>
<dbReference type="PRINTS" id="PR00060">
    <property type="entry name" value="RIBOSOMALL16"/>
</dbReference>
<dbReference type="SUPFAM" id="SSF54686">
    <property type="entry name" value="Ribosomal protein L16p/L10e"/>
    <property type="match status" value="1"/>
</dbReference>
<dbReference type="PROSITE" id="PS00586">
    <property type="entry name" value="RIBOSOMAL_L16_1"/>
    <property type="match status" value="1"/>
</dbReference>
<dbReference type="PROSITE" id="PS00701">
    <property type="entry name" value="RIBOSOMAL_L16_2"/>
    <property type="match status" value="1"/>
</dbReference>
<gene>
    <name evidence="1" type="primary">rpl16</name>
</gene>
<comment type="subunit">
    <text evidence="1">Part of the 50S ribosomal subunit.</text>
</comment>
<comment type="subcellular location">
    <subcellularLocation>
        <location>Plastid</location>
        <location>Chloroplast</location>
    </subcellularLocation>
</comment>
<comment type="similarity">
    <text evidence="1">Belongs to the universal ribosomal protein uL16 family.</text>
</comment>
<proteinExistence type="inferred from homology"/>
<accession>Q2L940</accession>
<organism>
    <name type="scientific">Gossypium hirsutum</name>
    <name type="common">Upland cotton</name>
    <name type="synonym">Gossypium mexicanum</name>
    <dbReference type="NCBI Taxonomy" id="3635"/>
    <lineage>
        <taxon>Eukaryota</taxon>
        <taxon>Viridiplantae</taxon>
        <taxon>Streptophyta</taxon>
        <taxon>Embryophyta</taxon>
        <taxon>Tracheophyta</taxon>
        <taxon>Spermatophyta</taxon>
        <taxon>Magnoliopsida</taxon>
        <taxon>eudicotyledons</taxon>
        <taxon>Gunneridae</taxon>
        <taxon>Pentapetalae</taxon>
        <taxon>rosids</taxon>
        <taxon>malvids</taxon>
        <taxon>Malvales</taxon>
        <taxon>Malvaceae</taxon>
        <taxon>Malvoideae</taxon>
        <taxon>Gossypium</taxon>
    </lineage>
</organism>
<sequence>MLSPKRNRFRKQHRGRMKGISYRGNRICFGRYALQALEPAWITSRQIEAGRRAMTRNVRRGGKIWVRIFPDKPVTVRPTETRMGSGKGSPEYWVAVVKPGRILYEMSGVAENIARKAISIAASKMPIKTQFIISG</sequence>